<dbReference type="EMBL" id="AE006470">
    <property type="protein sequence ID" value="AAM71875.1"/>
    <property type="molecule type" value="Genomic_DNA"/>
</dbReference>
<dbReference type="RefSeq" id="NP_661533.1">
    <property type="nucleotide sequence ID" value="NC_002932.3"/>
</dbReference>
<dbReference type="RefSeq" id="WP_010932320.1">
    <property type="nucleotide sequence ID" value="NC_002932.3"/>
</dbReference>
<dbReference type="SMR" id="Q8KEQ0"/>
<dbReference type="STRING" id="194439.CT0636"/>
<dbReference type="EnsemblBacteria" id="AAM71875">
    <property type="protein sequence ID" value="AAM71875"/>
    <property type="gene ID" value="CT0636"/>
</dbReference>
<dbReference type="KEGG" id="cte:CT0636"/>
<dbReference type="PATRIC" id="fig|194439.7.peg.593"/>
<dbReference type="eggNOG" id="COG0823">
    <property type="taxonomic scope" value="Bacteria"/>
</dbReference>
<dbReference type="HOGENOM" id="CLU_047123_2_0_10"/>
<dbReference type="OrthoDB" id="9815657at2"/>
<dbReference type="Proteomes" id="UP000001007">
    <property type="component" value="Chromosome"/>
</dbReference>
<dbReference type="GO" id="GO:0042597">
    <property type="term" value="C:periplasmic space"/>
    <property type="evidence" value="ECO:0007669"/>
    <property type="project" value="UniProtKB-SubCell"/>
</dbReference>
<dbReference type="GO" id="GO:0017038">
    <property type="term" value="P:protein import"/>
    <property type="evidence" value="ECO:0007669"/>
    <property type="project" value="InterPro"/>
</dbReference>
<dbReference type="Gene3D" id="2.140.10.30">
    <property type="entry name" value="Dipeptidylpeptidase IV, N-terminal domain"/>
    <property type="match status" value="1"/>
</dbReference>
<dbReference type="Gene3D" id="2.120.10.30">
    <property type="entry name" value="TolB, C-terminal domain"/>
    <property type="match status" value="2"/>
</dbReference>
<dbReference type="Gene3D" id="3.40.50.10070">
    <property type="entry name" value="TolB, N-terminal domain"/>
    <property type="match status" value="1"/>
</dbReference>
<dbReference type="InterPro" id="IPR011042">
    <property type="entry name" value="6-blade_b-propeller_TolB-like"/>
</dbReference>
<dbReference type="InterPro" id="IPR011659">
    <property type="entry name" value="PD40"/>
</dbReference>
<dbReference type="InterPro" id="IPR014167">
    <property type="entry name" value="Tol-Pal_TolB"/>
</dbReference>
<dbReference type="NCBIfam" id="TIGR02800">
    <property type="entry name" value="propeller_TolB"/>
    <property type="match status" value="1"/>
</dbReference>
<dbReference type="PANTHER" id="PTHR36842:SF1">
    <property type="entry name" value="PROTEIN TOLB"/>
    <property type="match status" value="1"/>
</dbReference>
<dbReference type="PANTHER" id="PTHR36842">
    <property type="entry name" value="PROTEIN TOLB HOMOLOG"/>
    <property type="match status" value="1"/>
</dbReference>
<dbReference type="Pfam" id="PF07676">
    <property type="entry name" value="PD40"/>
    <property type="match status" value="4"/>
</dbReference>
<dbReference type="SUPFAM" id="SSF52964">
    <property type="entry name" value="TolB, N-terminal domain"/>
    <property type="match status" value="1"/>
</dbReference>
<dbReference type="SUPFAM" id="SSF69304">
    <property type="entry name" value="Tricorn protease N-terminal domain"/>
    <property type="match status" value="1"/>
</dbReference>
<accession>Q8KEQ0</accession>
<keyword id="KW-0574">Periplasm</keyword>
<keyword id="KW-1185">Reference proteome</keyword>
<keyword id="KW-0732">Signal</keyword>
<reference key="1">
    <citation type="journal article" date="2002" name="Proc. Natl. Acad. Sci. U.S.A.">
        <title>The complete genome sequence of Chlorobium tepidum TLS, a photosynthetic, anaerobic, green-sulfur bacterium.</title>
        <authorList>
            <person name="Eisen J.A."/>
            <person name="Nelson K.E."/>
            <person name="Paulsen I.T."/>
            <person name="Heidelberg J.F."/>
            <person name="Wu M."/>
            <person name="Dodson R.J."/>
            <person name="DeBoy R.T."/>
            <person name="Gwinn M.L."/>
            <person name="Nelson W.C."/>
            <person name="Haft D.H."/>
            <person name="Hickey E.K."/>
            <person name="Peterson J.D."/>
            <person name="Durkin A.S."/>
            <person name="Kolonay J.F."/>
            <person name="Yang F."/>
            <person name="Holt I.E."/>
            <person name="Umayam L.A."/>
            <person name="Mason T.M."/>
            <person name="Brenner M."/>
            <person name="Shea T.P."/>
            <person name="Parksey D.S."/>
            <person name="Nierman W.C."/>
            <person name="Feldblyum T.V."/>
            <person name="Hansen C.L."/>
            <person name="Craven M.B."/>
            <person name="Radune D."/>
            <person name="Vamathevan J.J."/>
            <person name="Khouri H.M."/>
            <person name="White O."/>
            <person name="Gruber T.M."/>
            <person name="Ketchum K.A."/>
            <person name="Venter J.C."/>
            <person name="Tettelin H."/>
            <person name="Bryant D.A."/>
            <person name="Fraser C.M."/>
        </authorList>
    </citation>
    <scope>NUCLEOTIDE SEQUENCE [LARGE SCALE GENOMIC DNA]</scope>
    <source>
        <strain>ATCC 49652 / DSM 12025 / NBRC 103806 / TLS</strain>
    </source>
</reference>
<proteinExistence type="inferred from homology"/>
<feature type="signal peptide" evidence="2">
    <location>
        <begin position="1"/>
        <end position="27"/>
    </location>
</feature>
<feature type="chain" id="PRO_0000034641" description="Protein TolB homolog" evidence="2">
    <location>
        <begin position="28"/>
        <end position="434"/>
    </location>
</feature>
<feature type="region of interest" description="Disordered" evidence="3">
    <location>
        <begin position="413"/>
        <end position="434"/>
    </location>
</feature>
<gene>
    <name type="ordered locus">CT0636</name>
</gene>
<protein>
    <recommendedName>
        <fullName evidence="4">Protein TolB homolog</fullName>
    </recommendedName>
</protein>
<name>TOLB_CHLTE</name>
<comment type="subcellular location">
    <subcellularLocation>
        <location evidence="1">Periplasm</location>
    </subcellularLocation>
</comment>
<comment type="similarity">
    <text evidence="4">Belongs to the TolB family.</text>
</comment>
<evidence type="ECO:0000250" key="1">
    <source>
        <dbReference type="UniProtKB" id="P0A855"/>
    </source>
</evidence>
<evidence type="ECO:0000255" key="2"/>
<evidence type="ECO:0000256" key="3">
    <source>
        <dbReference type="SAM" id="MobiDB-lite"/>
    </source>
</evidence>
<evidence type="ECO:0000305" key="4"/>
<organism>
    <name type="scientific">Chlorobaculum tepidum (strain ATCC 49652 / DSM 12025 / NBRC 103806 / TLS)</name>
    <name type="common">Chlorobium tepidum</name>
    <dbReference type="NCBI Taxonomy" id="194439"/>
    <lineage>
        <taxon>Bacteria</taxon>
        <taxon>Pseudomonadati</taxon>
        <taxon>Chlorobiota</taxon>
        <taxon>Chlorobiia</taxon>
        <taxon>Chlorobiales</taxon>
        <taxon>Chlorobiaceae</taxon>
        <taxon>Chlorobaculum</taxon>
    </lineage>
</organism>
<sequence>MRSTRNSFACLCIMLFGMLFVPFTLRAEEVGEYIAIRKEGASRIAVVLDKTSADGGKQREWARSLDVTINKGLDFTGLFNLLPAPLNIRNGQNGGLNFASIASVGGDIYAGGSVTKRSGRPVLEMHVYDSSGKSLLARTYTGEESQLRAIGLRFCADLVELLTGKRSVFGTRIVFVANRTGNKEIYMCDFDGENVVQLTNSRSISLTPAVSPDGTYIAWTDYTSGKPNLYIKNIATGAKVSVNKHGVCISPAWRPGTNTLVTTLSYEGDQDLYLIRADGTVERRLTKGGGIDVSPTFSPDGSKMAFVSTRQGGPQIFIQDMNSGQVRRLTYSGIYNTQPSWSPNGDKILYSSMQKSGEINIFSINVDGSGLLQLTSGSGNNEHPSWSPDGSMIVFSSTRDGRRRLYVMNADGSNQRPLLNMQGEQQQPSWSVSK</sequence>